<feature type="chain" id="PRO_0000150486" description="Olfactory receptor 2L2">
    <location>
        <begin position="1"/>
        <end position="312"/>
    </location>
</feature>
<feature type="topological domain" description="Extracellular" evidence="1">
    <location>
        <begin position="1"/>
        <end position="24"/>
    </location>
</feature>
<feature type="transmembrane region" description="Helical; Name=1" evidence="1">
    <location>
        <begin position="25"/>
        <end position="48"/>
    </location>
</feature>
<feature type="topological domain" description="Cytoplasmic" evidence="1">
    <location>
        <begin position="49"/>
        <end position="56"/>
    </location>
</feature>
<feature type="transmembrane region" description="Helical; Name=2" evidence="1">
    <location>
        <begin position="57"/>
        <end position="78"/>
    </location>
</feature>
<feature type="topological domain" description="Extracellular" evidence="1">
    <location>
        <begin position="79"/>
        <end position="99"/>
    </location>
</feature>
<feature type="transmembrane region" description="Helical; Name=3" evidence="1">
    <location>
        <begin position="100"/>
        <end position="119"/>
    </location>
</feature>
<feature type="topological domain" description="Cytoplasmic" evidence="1">
    <location>
        <begin position="120"/>
        <end position="138"/>
    </location>
</feature>
<feature type="transmembrane region" description="Helical; Name=4" evidence="1">
    <location>
        <begin position="139"/>
        <end position="157"/>
    </location>
</feature>
<feature type="topological domain" description="Extracellular" evidence="1">
    <location>
        <begin position="158"/>
        <end position="194"/>
    </location>
</feature>
<feature type="transmembrane region" description="Helical; Name=5" evidence="1">
    <location>
        <begin position="195"/>
        <end position="218"/>
    </location>
</feature>
<feature type="topological domain" description="Cytoplasmic" evidence="1">
    <location>
        <begin position="219"/>
        <end position="235"/>
    </location>
</feature>
<feature type="transmembrane region" description="Helical; Name=6" evidence="1">
    <location>
        <begin position="236"/>
        <end position="258"/>
    </location>
</feature>
<feature type="topological domain" description="Extracellular" evidence="1">
    <location>
        <begin position="259"/>
        <end position="271"/>
    </location>
</feature>
<feature type="transmembrane region" description="Helical; Name=7" evidence="1">
    <location>
        <begin position="272"/>
        <end position="291"/>
    </location>
</feature>
<feature type="topological domain" description="Cytoplasmic" evidence="1">
    <location>
        <begin position="292"/>
        <end position="312"/>
    </location>
</feature>
<feature type="glycosylation site" description="N-linked (GlcNAc...) asparagine" evidence="1">
    <location>
        <position position="5"/>
    </location>
</feature>
<feature type="glycosylation site" description="N-linked (GlcNAc...) asparagine" evidence="1">
    <location>
        <position position="88"/>
    </location>
</feature>
<feature type="disulfide bond" evidence="2">
    <location>
        <begin position="96"/>
        <end position="188"/>
    </location>
</feature>
<feature type="sequence variant" id="VAR_053144" description="In dbSNP:rs12134979.">
    <original>F</original>
    <variation>L</variation>
    <location>
        <position position="249"/>
    </location>
</feature>
<feature type="sequence variant" id="VAR_053145" description="In dbSNP:rs6658141.">
    <original>V</original>
    <variation>L</variation>
    <location>
        <position position="259"/>
    </location>
</feature>
<organism>
    <name type="scientific">Homo sapiens</name>
    <name type="common">Human</name>
    <dbReference type="NCBI Taxonomy" id="9606"/>
    <lineage>
        <taxon>Eukaryota</taxon>
        <taxon>Metazoa</taxon>
        <taxon>Chordata</taxon>
        <taxon>Craniata</taxon>
        <taxon>Vertebrata</taxon>
        <taxon>Euteleostomi</taxon>
        <taxon>Mammalia</taxon>
        <taxon>Eutheria</taxon>
        <taxon>Euarchontoglires</taxon>
        <taxon>Primates</taxon>
        <taxon>Haplorrhini</taxon>
        <taxon>Catarrhini</taxon>
        <taxon>Hominidae</taxon>
        <taxon>Homo</taxon>
    </lineage>
</organism>
<proteinExistence type="evidence at transcript level"/>
<evidence type="ECO:0000255" key="1"/>
<evidence type="ECO:0000255" key="2">
    <source>
        <dbReference type="PROSITE-ProRule" id="PRU00521"/>
    </source>
</evidence>
<evidence type="ECO:0000305" key="3"/>
<protein>
    <recommendedName>
        <fullName>Olfactory receptor 2L2</fullName>
    </recommendedName>
    <alternativeName>
        <fullName>HTPCRH07</fullName>
    </alternativeName>
    <alternativeName>
        <fullName>Olfactory receptor 2L12</fullName>
    </alternativeName>
    <alternativeName>
        <fullName>Olfactory receptor 2L4</fullName>
    </alternativeName>
</protein>
<keyword id="KW-1003">Cell membrane</keyword>
<keyword id="KW-1015">Disulfide bond</keyword>
<keyword id="KW-0297">G-protein coupled receptor</keyword>
<keyword id="KW-0325">Glycoprotein</keyword>
<keyword id="KW-0472">Membrane</keyword>
<keyword id="KW-0552">Olfaction</keyword>
<keyword id="KW-0675">Receptor</keyword>
<keyword id="KW-1185">Reference proteome</keyword>
<keyword id="KW-0716">Sensory transduction</keyword>
<keyword id="KW-0807">Transducer</keyword>
<keyword id="KW-0812">Transmembrane</keyword>
<keyword id="KW-1133">Transmembrane helix</keyword>
<gene>
    <name type="primary">OR2L2</name>
    <name type="synonym">OR2L12</name>
    <name type="synonym">OR2L4P</name>
</gene>
<name>OR2L2_HUMAN</name>
<dbReference type="EMBL" id="AB065597">
    <property type="protein sequence ID" value="BAC05825.1"/>
    <property type="molecule type" value="Genomic_DNA"/>
</dbReference>
<dbReference type="EMBL" id="BC104792">
    <property type="protein sequence ID" value="AAI04793.1"/>
    <property type="molecule type" value="mRNA"/>
</dbReference>
<dbReference type="EMBL" id="BC104794">
    <property type="protein sequence ID" value="AAI04795.1"/>
    <property type="molecule type" value="mRNA"/>
</dbReference>
<dbReference type="EMBL" id="X64978">
    <property type="status" value="NOT_ANNOTATED_CDS"/>
    <property type="molecule type" value="mRNA"/>
</dbReference>
<dbReference type="CCDS" id="CCDS31103.1"/>
<dbReference type="RefSeq" id="NP_001004686.1">
    <property type="nucleotide sequence ID" value="NM_001004686.3"/>
</dbReference>
<dbReference type="RefSeq" id="NP_001372784.1">
    <property type="nucleotide sequence ID" value="NM_001385855.1"/>
</dbReference>
<dbReference type="RefSeq" id="XP_011542460.1">
    <property type="nucleotide sequence ID" value="XM_011544158.2"/>
</dbReference>
<dbReference type="SMR" id="Q8NH16"/>
<dbReference type="BioGRID" id="117634">
    <property type="interactions" value="14"/>
</dbReference>
<dbReference type="FunCoup" id="Q8NH16">
    <property type="interactions" value="454"/>
</dbReference>
<dbReference type="STRING" id="9606.ENSP00000493410"/>
<dbReference type="GlyCosmos" id="Q8NH16">
    <property type="glycosylation" value="2 sites, No reported glycans"/>
</dbReference>
<dbReference type="GlyGen" id="Q8NH16">
    <property type="glycosylation" value="3 sites, 1 O-linked glycan (1 site)"/>
</dbReference>
<dbReference type="iPTMnet" id="Q8NH16"/>
<dbReference type="PhosphoSitePlus" id="Q8NH16"/>
<dbReference type="BioMuta" id="OR2L2"/>
<dbReference type="DMDM" id="38258181"/>
<dbReference type="MassIVE" id="Q8NH16"/>
<dbReference type="PaxDb" id="9606-ENSP00000355435"/>
<dbReference type="Antibodypedia" id="54364">
    <property type="antibodies" value="22 antibodies from 12 providers"/>
</dbReference>
<dbReference type="DNASU" id="26246"/>
<dbReference type="Ensembl" id="ENST00000366479.4">
    <property type="protein sequence ID" value="ENSP00000355435.2"/>
    <property type="gene ID" value="ENSG00000203663.4"/>
</dbReference>
<dbReference type="Ensembl" id="ENST00000641771.1">
    <property type="protein sequence ID" value="ENSP00000493410.1"/>
    <property type="gene ID" value="ENSG00000203663.4"/>
</dbReference>
<dbReference type="Ensembl" id="ENST00000642011.1">
    <property type="protein sequence ID" value="ENSP00000493154.1"/>
    <property type="gene ID" value="ENSG00000203663.4"/>
</dbReference>
<dbReference type="GeneID" id="26246"/>
<dbReference type="KEGG" id="hsa:26246"/>
<dbReference type="MANE-Select" id="ENST00000641771.1">
    <property type="protein sequence ID" value="ENSP00000493410.1"/>
    <property type="RefSeq nucleotide sequence ID" value="NM_001385855.1"/>
    <property type="RefSeq protein sequence ID" value="NP_001372784.1"/>
</dbReference>
<dbReference type="UCSC" id="uc001idw.4">
    <property type="organism name" value="human"/>
</dbReference>
<dbReference type="AGR" id="HGNC:8266"/>
<dbReference type="CTD" id="26246"/>
<dbReference type="GeneCards" id="OR2L2"/>
<dbReference type="HGNC" id="HGNC:8266">
    <property type="gene designation" value="OR2L2"/>
</dbReference>
<dbReference type="HPA" id="ENSG00000203663">
    <property type="expression patterns" value="Tissue enhanced (brain, retina, testis)"/>
</dbReference>
<dbReference type="neXtProt" id="NX_Q8NH16"/>
<dbReference type="OpenTargets" id="ENSG00000203663"/>
<dbReference type="PharmGKB" id="PA32183"/>
<dbReference type="VEuPathDB" id="HostDB:ENSG00000203663"/>
<dbReference type="eggNOG" id="ENOG502RTYI">
    <property type="taxonomic scope" value="Eukaryota"/>
</dbReference>
<dbReference type="GeneTree" id="ENSGT01130000278325"/>
<dbReference type="HOGENOM" id="CLU_012526_1_0_1"/>
<dbReference type="InParanoid" id="Q8NH16"/>
<dbReference type="OMA" id="TYICTIV"/>
<dbReference type="OrthoDB" id="9834388at2759"/>
<dbReference type="PAN-GO" id="Q8NH16">
    <property type="GO annotations" value="0 GO annotations based on evolutionary models"/>
</dbReference>
<dbReference type="PhylomeDB" id="Q8NH16"/>
<dbReference type="TreeFam" id="TF337295"/>
<dbReference type="PathwayCommons" id="Q8NH16"/>
<dbReference type="Reactome" id="R-HSA-9752946">
    <property type="pathway name" value="Expression and translocation of olfactory receptors"/>
</dbReference>
<dbReference type="BioGRID-ORCS" id="26246">
    <property type="hits" value="8 hits in 708 CRISPR screens"/>
</dbReference>
<dbReference type="GeneWiki" id="OR2L2"/>
<dbReference type="GenomeRNAi" id="26246"/>
<dbReference type="Pharos" id="Q8NH16">
    <property type="development level" value="Tdark"/>
</dbReference>
<dbReference type="PRO" id="PR:Q8NH16"/>
<dbReference type="Proteomes" id="UP000005640">
    <property type="component" value="Chromosome 1"/>
</dbReference>
<dbReference type="RNAct" id="Q8NH16">
    <property type="molecule type" value="protein"/>
</dbReference>
<dbReference type="Bgee" id="ENSG00000203663">
    <property type="expression patterns" value="Expressed in primordial germ cell in gonad and 26 other cell types or tissues"/>
</dbReference>
<dbReference type="ExpressionAtlas" id="Q8NH16">
    <property type="expression patterns" value="baseline and differential"/>
</dbReference>
<dbReference type="GO" id="GO:0005886">
    <property type="term" value="C:plasma membrane"/>
    <property type="evidence" value="ECO:0000318"/>
    <property type="project" value="GO_Central"/>
</dbReference>
<dbReference type="GO" id="GO:0004930">
    <property type="term" value="F:G protein-coupled receptor activity"/>
    <property type="evidence" value="ECO:0007669"/>
    <property type="project" value="UniProtKB-KW"/>
</dbReference>
<dbReference type="GO" id="GO:0004984">
    <property type="term" value="F:olfactory receptor activity"/>
    <property type="evidence" value="ECO:0000318"/>
    <property type="project" value="GO_Central"/>
</dbReference>
<dbReference type="GO" id="GO:0050911">
    <property type="term" value="P:detection of chemical stimulus involved in sensory perception of smell"/>
    <property type="evidence" value="ECO:0000318"/>
    <property type="project" value="GO_Central"/>
</dbReference>
<dbReference type="CDD" id="cd15421">
    <property type="entry name" value="7tmA_OR2T-like"/>
    <property type="match status" value="1"/>
</dbReference>
<dbReference type="FunFam" id="1.10.1220.70:FF:000001">
    <property type="entry name" value="Olfactory receptor"/>
    <property type="match status" value="1"/>
</dbReference>
<dbReference type="FunFam" id="1.20.1070.10:FF:000008">
    <property type="entry name" value="Olfactory receptor"/>
    <property type="match status" value="1"/>
</dbReference>
<dbReference type="Gene3D" id="1.20.1070.10">
    <property type="entry name" value="Rhodopsin 7-helix transmembrane proteins"/>
    <property type="match status" value="1"/>
</dbReference>
<dbReference type="InterPro" id="IPR000276">
    <property type="entry name" value="GPCR_Rhodpsn"/>
</dbReference>
<dbReference type="InterPro" id="IPR017452">
    <property type="entry name" value="GPCR_Rhodpsn_7TM"/>
</dbReference>
<dbReference type="InterPro" id="IPR000725">
    <property type="entry name" value="Olfact_rcpt"/>
</dbReference>
<dbReference type="PANTHER" id="PTHR26453">
    <property type="entry name" value="OLFACTORY RECEPTOR"/>
    <property type="match status" value="1"/>
</dbReference>
<dbReference type="Pfam" id="PF13853">
    <property type="entry name" value="7tm_4"/>
    <property type="match status" value="1"/>
</dbReference>
<dbReference type="PRINTS" id="PR00237">
    <property type="entry name" value="GPCRRHODOPSN"/>
</dbReference>
<dbReference type="PRINTS" id="PR00245">
    <property type="entry name" value="OLFACTORYR"/>
</dbReference>
<dbReference type="SUPFAM" id="SSF81321">
    <property type="entry name" value="Family A G protein-coupled receptor-like"/>
    <property type="match status" value="1"/>
</dbReference>
<dbReference type="PROSITE" id="PS00237">
    <property type="entry name" value="G_PROTEIN_RECEP_F1_1"/>
    <property type="match status" value="1"/>
</dbReference>
<dbReference type="PROSITE" id="PS50262">
    <property type="entry name" value="G_PROTEIN_RECEP_F1_2"/>
    <property type="match status" value="1"/>
</dbReference>
<reference key="1">
    <citation type="submission" date="2001-07" db="EMBL/GenBank/DDBJ databases">
        <title>Genome-wide discovery and analysis of human seven transmembrane helix receptor genes.</title>
        <authorList>
            <person name="Suwa M."/>
            <person name="Sato T."/>
            <person name="Okouchi I."/>
            <person name="Arita M."/>
            <person name="Futami K."/>
            <person name="Matsumoto S."/>
            <person name="Tsutsumi S."/>
            <person name="Aburatani H."/>
            <person name="Asai K."/>
            <person name="Akiyama Y."/>
        </authorList>
    </citation>
    <scope>NUCLEOTIDE SEQUENCE [GENOMIC DNA]</scope>
</reference>
<reference key="2">
    <citation type="journal article" date="2004" name="Genome Res.">
        <title>The status, quality, and expansion of the NIH full-length cDNA project: the Mammalian Gene Collection (MGC).</title>
        <authorList>
            <consortium name="The MGC Project Team"/>
        </authorList>
    </citation>
    <scope>NUCLEOTIDE SEQUENCE [LARGE SCALE MRNA]</scope>
    <source>
        <tissue>Brain</tissue>
    </source>
</reference>
<reference key="3">
    <citation type="journal article" date="1992" name="Nature">
        <title>Expression of members of the putative olfactory receptor gene family in mammalian germ cells.</title>
        <authorList>
            <person name="Parmentier M."/>
            <person name="Libert F."/>
            <person name="Schurmans S."/>
            <person name="Schiffmann S."/>
            <person name="Lefort A."/>
            <person name="Eggerickx D."/>
            <person name="Ledent C."/>
            <person name="Mollereau C."/>
            <person name="Gerard C."/>
            <person name="Perret J."/>
            <person name="Grootegoed A."/>
            <person name="Vassart G."/>
        </authorList>
    </citation>
    <scope>NUCLEOTIDE SEQUENCE [MRNA] OF 125-238</scope>
    <source>
        <tissue>Testis</tissue>
    </source>
</reference>
<comment type="function">
    <text evidence="3">Odorant receptor.</text>
</comment>
<comment type="subcellular location">
    <subcellularLocation>
        <location>Cell membrane</location>
        <topology>Multi-pass membrane protein</topology>
    </subcellularLocation>
</comment>
<comment type="similarity">
    <text evidence="2">Belongs to the G-protein coupled receptor 1 family.</text>
</comment>
<comment type="online information" name="Human Olfactory Receptor Data Exploratorium (HORDE)">
    <link uri="http://genome.weizmann.ac.il/horde/card/index/symbol:OR2L2"/>
</comment>
<accession>Q8NH16</accession>
<accession>Q2M3T5</accession>
<sequence length="312" mass="35495">MENYNQTSTDFILLGLFPQSRIGLFVFTLIFLIFLMALIGNLSMILLIFLDIHLHTPMYFLLSQLSLIDLNYISTIVPKMVYDFLYGNKSISFTGCGIQSFFFLTLAVAEGLLLTSMAYDRYVAICFPLHYPIRISKRVCVMMITGSWMISSINSCAHTVYALCIPYCKSRAINHFFCDVPAMLTLACTDTWVYESTVFLSSTIFLVLPFTGIACSYGRVLLAVYRMHSAEGRKKAYSTCSTHLTVVSFYYAPFAYTYVRPRSLRSPTEDKILAVFYTILTPMLNPIIYSLRNKEVMGALTQVIQKIFSVKM</sequence>